<comment type="function">
    <text evidence="1">Involved in copper export.</text>
</comment>
<comment type="catalytic activity">
    <reaction>
        <text>Cu(+)(in) + ATP + H2O = Cu(+)(out) + ADP + phosphate + H(+)</text>
        <dbReference type="Rhea" id="RHEA:25792"/>
        <dbReference type="ChEBI" id="CHEBI:15377"/>
        <dbReference type="ChEBI" id="CHEBI:15378"/>
        <dbReference type="ChEBI" id="CHEBI:30616"/>
        <dbReference type="ChEBI" id="CHEBI:43474"/>
        <dbReference type="ChEBI" id="CHEBI:49552"/>
        <dbReference type="ChEBI" id="CHEBI:456216"/>
        <dbReference type="EC" id="7.2.2.8"/>
    </reaction>
</comment>
<comment type="subcellular location">
    <subcellularLocation>
        <location evidence="1">Cell membrane</location>
        <topology evidence="1">Multi-pass membrane protein</topology>
    </subcellularLocation>
</comment>
<comment type="similarity">
    <text evidence="4">Belongs to the cation transport ATPase (P-type) (TC 3.A.3) family. Type IB subfamily.</text>
</comment>
<keyword id="KW-0067">ATP-binding</keyword>
<keyword id="KW-1003">Cell membrane</keyword>
<keyword id="KW-0186">Copper</keyword>
<keyword id="KW-0187">Copper transport</keyword>
<keyword id="KW-0406">Ion transport</keyword>
<keyword id="KW-0460">Magnesium</keyword>
<keyword id="KW-0472">Membrane</keyword>
<keyword id="KW-0479">Metal-binding</keyword>
<keyword id="KW-0547">Nucleotide-binding</keyword>
<keyword id="KW-0597">Phosphoprotein</keyword>
<keyword id="KW-0677">Repeat</keyword>
<keyword id="KW-1278">Translocase</keyword>
<keyword id="KW-0812">Transmembrane</keyword>
<keyword id="KW-1133">Transmembrane helix</keyword>
<keyword id="KW-0813">Transport</keyword>
<reference key="1">
    <citation type="journal article" date="2008" name="Antimicrob. Agents Chemother.">
        <title>Mutated response regulator graR is responsible for phenotypic conversion of Staphylococcus aureus from heterogeneous vancomycin-intermediate resistance to vancomycin-intermediate resistance.</title>
        <authorList>
            <person name="Neoh H.-M."/>
            <person name="Cui L."/>
            <person name="Yuzawa H."/>
            <person name="Takeuchi F."/>
            <person name="Matsuo M."/>
            <person name="Hiramatsu K."/>
        </authorList>
    </citation>
    <scope>NUCLEOTIDE SEQUENCE [LARGE SCALE GENOMIC DNA]</scope>
    <source>
        <strain>Mu3 / ATCC 700698</strain>
    </source>
</reference>
<gene>
    <name type="primary">copA</name>
    <name type="ordered locus">SAHV_2541</name>
</gene>
<feature type="chain" id="PRO_0000350589" description="Copper-exporting P-type ATPase">
    <location>
        <begin position="1"/>
        <end position="802"/>
    </location>
</feature>
<feature type="transmembrane region" description="Helical" evidence="2">
    <location>
        <begin position="161"/>
        <end position="181"/>
    </location>
</feature>
<feature type="transmembrane region" description="Helical" evidence="2">
    <location>
        <begin position="192"/>
        <end position="212"/>
    </location>
</feature>
<feature type="transmembrane region" description="Helical" evidence="2">
    <location>
        <begin position="224"/>
        <end position="244"/>
    </location>
</feature>
<feature type="transmembrane region" description="Helical" evidence="2">
    <location>
        <begin position="256"/>
        <end position="276"/>
    </location>
</feature>
<feature type="transmembrane region" description="Helical" evidence="2">
    <location>
        <begin position="411"/>
        <end position="431"/>
    </location>
</feature>
<feature type="transmembrane region" description="Helical" evidence="2">
    <location>
        <begin position="438"/>
        <end position="458"/>
    </location>
</feature>
<feature type="transmembrane region" description="Helical" evidence="2">
    <location>
        <begin position="748"/>
        <end position="767"/>
    </location>
</feature>
<feature type="transmembrane region" description="Helical" evidence="2">
    <location>
        <begin position="771"/>
        <end position="790"/>
    </location>
</feature>
<feature type="domain" description="HMA 1" evidence="3">
    <location>
        <begin position="5"/>
        <end position="70"/>
    </location>
</feature>
<feature type="domain" description="HMA 2" evidence="3">
    <location>
        <begin position="72"/>
        <end position="138"/>
    </location>
</feature>
<feature type="active site" description="4-aspartylphosphate intermediate" evidence="1">
    <location>
        <position position="495"/>
    </location>
</feature>
<feature type="binding site" evidence="3">
    <location>
        <position position="16"/>
    </location>
    <ligand>
        <name>Cu(+)</name>
        <dbReference type="ChEBI" id="CHEBI:49552"/>
        <label>1</label>
    </ligand>
</feature>
<feature type="binding site" evidence="3">
    <location>
        <position position="19"/>
    </location>
    <ligand>
        <name>Cu(+)</name>
        <dbReference type="ChEBI" id="CHEBI:49552"/>
        <label>1</label>
    </ligand>
</feature>
<feature type="binding site" evidence="3">
    <location>
        <position position="83"/>
    </location>
    <ligand>
        <name>Cu(+)</name>
        <dbReference type="ChEBI" id="CHEBI:49552"/>
        <label>2</label>
    </ligand>
</feature>
<feature type="binding site" evidence="3">
    <location>
        <position position="86"/>
    </location>
    <ligand>
        <name>Cu(+)</name>
        <dbReference type="ChEBI" id="CHEBI:49552"/>
        <label>2</label>
    </ligand>
</feature>
<feature type="binding site">
    <location>
        <position position="690"/>
    </location>
    <ligand>
        <name>Mg(2+)</name>
        <dbReference type="ChEBI" id="CHEBI:18420"/>
    </ligand>
</feature>
<feature type="binding site">
    <location>
        <position position="694"/>
    </location>
    <ligand>
        <name>Mg(2+)</name>
        <dbReference type="ChEBI" id="CHEBI:18420"/>
    </ligand>
</feature>
<dbReference type="EC" id="7.2.2.8"/>
<dbReference type="EMBL" id="AP009324">
    <property type="protein sequence ID" value="BAF79424.1"/>
    <property type="molecule type" value="Genomic_DNA"/>
</dbReference>
<dbReference type="RefSeq" id="WP_000024139.1">
    <property type="nucleotide sequence ID" value="NC_009782.1"/>
</dbReference>
<dbReference type="SMR" id="A7X6S1"/>
<dbReference type="KEGG" id="saw:SAHV_2541"/>
<dbReference type="HOGENOM" id="CLU_001771_0_3_9"/>
<dbReference type="GO" id="GO:0005886">
    <property type="term" value="C:plasma membrane"/>
    <property type="evidence" value="ECO:0007669"/>
    <property type="project" value="UniProtKB-SubCell"/>
</dbReference>
<dbReference type="GO" id="GO:0005524">
    <property type="term" value="F:ATP binding"/>
    <property type="evidence" value="ECO:0007669"/>
    <property type="project" value="UniProtKB-KW"/>
</dbReference>
<dbReference type="GO" id="GO:0016887">
    <property type="term" value="F:ATP hydrolysis activity"/>
    <property type="evidence" value="ECO:0007669"/>
    <property type="project" value="InterPro"/>
</dbReference>
<dbReference type="GO" id="GO:0005507">
    <property type="term" value="F:copper ion binding"/>
    <property type="evidence" value="ECO:0007669"/>
    <property type="project" value="InterPro"/>
</dbReference>
<dbReference type="GO" id="GO:0043682">
    <property type="term" value="F:P-type divalent copper transporter activity"/>
    <property type="evidence" value="ECO:0007669"/>
    <property type="project" value="TreeGrafter"/>
</dbReference>
<dbReference type="GO" id="GO:0140581">
    <property type="term" value="F:P-type monovalent copper transporter activity"/>
    <property type="evidence" value="ECO:0007669"/>
    <property type="project" value="UniProtKB-EC"/>
</dbReference>
<dbReference type="GO" id="GO:0055070">
    <property type="term" value="P:copper ion homeostasis"/>
    <property type="evidence" value="ECO:0007669"/>
    <property type="project" value="TreeGrafter"/>
</dbReference>
<dbReference type="CDD" id="cd00371">
    <property type="entry name" value="HMA"/>
    <property type="match status" value="2"/>
</dbReference>
<dbReference type="CDD" id="cd02094">
    <property type="entry name" value="P-type_ATPase_Cu-like"/>
    <property type="match status" value="1"/>
</dbReference>
<dbReference type="FunFam" id="3.40.1110.10:FF:000038">
    <property type="entry name" value="Copper-exporting P-type ATPase"/>
    <property type="match status" value="1"/>
</dbReference>
<dbReference type="FunFam" id="3.40.1110.10:FF:000049">
    <property type="entry name" value="Copper-exporting P-type ATPase"/>
    <property type="match status" value="1"/>
</dbReference>
<dbReference type="FunFam" id="2.70.150.10:FF:000020">
    <property type="entry name" value="Copper-exporting P-type ATPase A"/>
    <property type="match status" value="1"/>
</dbReference>
<dbReference type="FunFam" id="3.30.70.100:FF:000005">
    <property type="entry name" value="Copper-exporting P-type ATPase A"/>
    <property type="match status" value="2"/>
</dbReference>
<dbReference type="FunFam" id="3.40.50.1000:FF:000144">
    <property type="entry name" value="copper-transporting ATPase 1 isoform X2"/>
    <property type="match status" value="1"/>
</dbReference>
<dbReference type="Gene3D" id="3.30.70.100">
    <property type="match status" value="2"/>
</dbReference>
<dbReference type="Gene3D" id="3.40.1110.10">
    <property type="entry name" value="Calcium-transporting ATPase, cytoplasmic domain N"/>
    <property type="match status" value="2"/>
</dbReference>
<dbReference type="Gene3D" id="2.70.150.10">
    <property type="entry name" value="Calcium-transporting ATPase, cytoplasmic transduction domain A"/>
    <property type="match status" value="1"/>
</dbReference>
<dbReference type="Gene3D" id="3.40.50.1000">
    <property type="entry name" value="HAD superfamily/HAD-like"/>
    <property type="match status" value="1"/>
</dbReference>
<dbReference type="InterPro" id="IPR023299">
    <property type="entry name" value="ATPase_P-typ_cyto_dom_N"/>
</dbReference>
<dbReference type="InterPro" id="IPR018303">
    <property type="entry name" value="ATPase_P-typ_P_site"/>
</dbReference>
<dbReference type="InterPro" id="IPR023298">
    <property type="entry name" value="ATPase_P-typ_TM_dom_sf"/>
</dbReference>
<dbReference type="InterPro" id="IPR008250">
    <property type="entry name" value="ATPase_P-typ_transduc_dom_A_sf"/>
</dbReference>
<dbReference type="InterPro" id="IPR036412">
    <property type="entry name" value="HAD-like_sf"/>
</dbReference>
<dbReference type="InterPro" id="IPR023214">
    <property type="entry name" value="HAD_sf"/>
</dbReference>
<dbReference type="InterPro" id="IPR017969">
    <property type="entry name" value="Heavy-metal-associated_CS"/>
</dbReference>
<dbReference type="InterPro" id="IPR006122">
    <property type="entry name" value="HMA_Cu_ion-bd"/>
</dbReference>
<dbReference type="InterPro" id="IPR006121">
    <property type="entry name" value="HMA_dom"/>
</dbReference>
<dbReference type="InterPro" id="IPR036163">
    <property type="entry name" value="HMA_dom_sf"/>
</dbReference>
<dbReference type="InterPro" id="IPR027256">
    <property type="entry name" value="P-typ_ATPase_IB"/>
</dbReference>
<dbReference type="InterPro" id="IPR001757">
    <property type="entry name" value="P_typ_ATPase"/>
</dbReference>
<dbReference type="InterPro" id="IPR044492">
    <property type="entry name" value="P_typ_ATPase_HD_dom"/>
</dbReference>
<dbReference type="NCBIfam" id="TIGR01511">
    <property type="entry name" value="ATPase-IB1_Cu"/>
    <property type="match status" value="1"/>
</dbReference>
<dbReference type="NCBIfam" id="TIGR01525">
    <property type="entry name" value="ATPase-IB_hvy"/>
    <property type="match status" value="1"/>
</dbReference>
<dbReference type="NCBIfam" id="TIGR01494">
    <property type="entry name" value="ATPase_P-type"/>
    <property type="match status" value="1"/>
</dbReference>
<dbReference type="NCBIfam" id="TIGR00003">
    <property type="entry name" value="copper ion binding protein"/>
    <property type="match status" value="2"/>
</dbReference>
<dbReference type="PANTHER" id="PTHR43520">
    <property type="entry name" value="ATP7, ISOFORM B"/>
    <property type="match status" value="1"/>
</dbReference>
<dbReference type="PANTHER" id="PTHR43520:SF8">
    <property type="entry name" value="P-TYPE CU(+) TRANSPORTER"/>
    <property type="match status" value="1"/>
</dbReference>
<dbReference type="Pfam" id="PF00122">
    <property type="entry name" value="E1-E2_ATPase"/>
    <property type="match status" value="1"/>
</dbReference>
<dbReference type="Pfam" id="PF00403">
    <property type="entry name" value="HMA"/>
    <property type="match status" value="2"/>
</dbReference>
<dbReference type="Pfam" id="PF00702">
    <property type="entry name" value="Hydrolase"/>
    <property type="match status" value="1"/>
</dbReference>
<dbReference type="PRINTS" id="PR00119">
    <property type="entry name" value="CATATPASE"/>
</dbReference>
<dbReference type="PRINTS" id="PR00943">
    <property type="entry name" value="CUATPASE"/>
</dbReference>
<dbReference type="SFLD" id="SFLDS00003">
    <property type="entry name" value="Haloacid_Dehalogenase"/>
    <property type="match status" value="1"/>
</dbReference>
<dbReference type="SFLD" id="SFLDF00027">
    <property type="entry name" value="p-type_atpase"/>
    <property type="match status" value="1"/>
</dbReference>
<dbReference type="SUPFAM" id="SSF81653">
    <property type="entry name" value="Calcium ATPase, transduction domain A"/>
    <property type="match status" value="1"/>
</dbReference>
<dbReference type="SUPFAM" id="SSF81665">
    <property type="entry name" value="Calcium ATPase, transmembrane domain M"/>
    <property type="match status" value="1"/>
</dbReference>
<dbReference type="SUPFAM" id="SSF56784">
    <property type="entry name" value="HAD-like"/>
    <property type="match status" value="1"/>
</dbReference>
<dbReference type="SUPFAM" id="SSF55008">
    <property type="entry name" value="HMA, heavy metal-associated domain"/>
    <property type="match status" value="2"/>
</dbReference>
<dbReference type="PROSITE" id="PS00154">
    <property type="entry name" value="ATPASE_E1_E2"/>
    <property type="match status" value="1"/>
</dbReference>
<dbReference type="PROSITE" id="PS01047">
    <property type="entry name" value="HMA_1"/>
    <property type="match status" value="2"/>
</dbReference>
<dbReference type="PROSITE" id="PS50846">
    <property type="entry name" value="HMA_2"/>
    <property type="match status" value="2"/>
</dbReference>
<organism>
    <name type="scientific">Staphylococcus aureus (strain Mu3 / ATCC 700698)</name>
    <dbReference type="NCBI Taxonomy" id="418127"/>
    <lineage>
        <taxon>Bacteria</taxon>
        <taxon>Bacillati</taxon>
        <taxon>Bacillota</taxon>
        <taxon>Bacilli</taxon>
        <taxon>Bacillales</taxon>
        <taxon>Staphylococcaceae</taxon>
        <taxon>Staphylococcus</taxon>
    </lineage>
</organism>
<sequence>MANTKKTTLDITGMTCAACSNRIEKKLNKLDDVNAQVNLTTEKATVEYNPDQHDVQEFINTIQHLGYGVTVETVELDITGMTCAACSSRIEKVLNKMNGVQNATVNLTTEQAKVDYYPEETDADKLVTRIQKLGYDASIKDNNKDQTSRKAEALQHKLIKLIISAVLSLPLLMLMFVHLFNMHIPALFTNPWFQFILATPVQFIIGWQFYVGAYKNLRNGGANMDVLVAVGTSAAYFYSIYEMVRWLNGSTTQPHLYFETSAVLLTLILFGKYLEARAKSQTTNALGELLSLQAKEARILKDGNEVMIPLNEVHVGDTLIVKPGEKIPVDGKIIKGMTAIDESMLTGESIPVEKNVDDTVIGSTMNKNGTITMTATKVGGDTALANIIKVVEEAQSSKAPIQRLADIISGYFVPIVVGIALLIFIVWITLVTPGTFEPALVASISVLVIACPCALGLATPTSIMVGTGRAAENGILFKGGEFVERTHQIDTIVLDKTGTITNGRPVVTDYHGDNQTLQLLATAEKDSEHPLAEAIVNYAKEKQLTLTETTTFKAVPGHGIEATIDHHHILVGNRKLMADNDISLPKHISDDLTHYERDGKTAMLIAVNYSLTGIIAVADTVKDHAKDAIKQLHDMGIEVAMLTGDNKNTAQAIAKQVGIDTVIADILPEEKAAQIAKLQQQGKKVAMVGDGVNDAPALVKADIGIAIGTGTEVAIEAADITILGGDLMLIPKAIYASKATIRNIRQNLFWAFGYNIAGIPIAALGLLAPWVAGAAMALSSVSVVTNALRLKKMRLEPRRKDA</sequence>
<evidence type="ECO:0000250" key="1"/>
<evidence type="ECO:0000255" key="2"/>
<evidence type="ECO:0000255" key="3">
    <source>
        <dbReference type="PROSITE-ProRule" id="PRU00280"/>
    </source>
</evidence>
<evidence type="ECO:0000305" key="4"/>
<accession>A7X6S1</accession>
<proteinExistence type="inferred from homology"/>
<name>COPA_STAA1</name>
<protein>
    <recommendedName>
        <fullName>Copper-exporting P-type ATPase</fullName>
        <ecNumber>7.2.2.8</ecNumber>
    </recommendedName>
    <alternativeName>
        <fullName>Copper-exporting P-type ATPase A</fullName>
    </alternativeName>
    <alternativeName>
        <fullName>Cu(+)-exporting ATPase</fullName>
    </alternativeName>
</protein>